<gene>
    <name type="primary">bna5-2</name>
    <name type="ORF">AFUB_066950</name>
</gene>
<accession>B0Y6H2</accession>
<keyword id="KW-0963">Cytoplasm</keyword>
<keyword id="KW-0378">Hydrolase</keyword>
<keyword id="KW-0662">Pyridine nucleotide biosynthesis</keyword>
<keyword id="KW-0663">Pyridoxal phosphate</keyword>
<dbReference type="EC" id="3.7.1.3" evidence="1"/>
<dbReference type="EMBL" id="DS499598">
    <property type="protein sequence ID" value="EDP50357.1"/>
    <property type="molecule type" value="Genomic_DNA"/>
</dbReference>
<dbReference type="SMR" id="B0Y6H2"/>
<dbReference type="EnsemblFungi" id="EDP50357">
    <property type="protein sequence ID" value="EDP50357"/>
    <property type="gene ID" value="AFUB_066950"/>
</dbReference>
<dbReference type="VEuPathDB" id="FungiDB:AFUB_066950"/>
<dbReference type="HOGENOM" id="CLU_003433_4_0_1"/>
<dbReference type="OrthoDB" id="39729at5052"/>
<dbReference type="PhylomeDB" id="B0Y6H2"/>
<dbReference type="UniPathway" id="UPA00253">
    <property type="reaction ID" value="UER00329"/>
</dbReference>
<dbReference type="UniPathway" id="UPA00334">
    <property type="reaction ID" value="UER00455"/>
</dbReference>
<dbReference type="Proteomes" id="UP000001699">
    <property type="component" value="Unassembled WGS sequence"/>
</dbReference>
<dbReference type="GO" id="GO:0005737">
    <property type="term" value="C:cytoplasm"/>
    <property type="evidence" value="ECO:0007669"/>
    <property type="project" value="UniProtKB-SubCell"/>
</dbReference>
<dbReference type="GO" id="GO:0030429">
    <property type="term" value="F:kynureninase activity"/>
    <property type="evidence" value="ECO:0007669"/>
    <property type="project" value="UniProtKB-UniRule"/>
</dbReference>
<dbReference type="GO" id="GO:0030170">
    <property type="term" value="F:pyridoxal phosphate binding"/>
    <property type="evidence" value="ECO:0007669"/>
    <property type="project" value="UniProtKB-UniRule"/>
</dbReference>
<dbReference type="GO" id="GO:0034354">
    <property type="term" value="P:'de novo' NAD biosynthetic process from L-tryptophan"/>
    <property type="evidence" value="ECO:0007669"/>
    <property type="project" value="UniProtKB-UniRule"/>
</dbReference>
<dbReference type="GO" id="GO:0043420">
    <property type="term" value="P:anthranilate metabolic process"/>
    <property type="evidence" value="ECO:0007669"/>
    <property type="project" value="UniProtKB-UniRule"/>
</dbReference>
<dbReference type="GO" id="GO:0097053">
    <property type="term" value="P:L-kynurenine catabolic process"/>
    <property type="evidence" value="ECO:0007669"/>
    <property type="project" value="UniProtKB-UniRule"/>
</dbReference>
<dbReference type="GO" id="GO:0019441">
    <property type="term" value="P:L-tryptophan catabolic process to kynurenine"/>
    <property type="evidence" value="ECO:0007669"/>
    <property type="project" value="TreeGrafter"/>
</dbReference>
<dbReference type="GO" id="GO:0019805">
    <property type="term" value="P:quinolinate biosynthetic process"/>
    <property type="evidence" value="ECO:0007669"/>
    <property type="project" value="UniProtKB-UniRule"/>
</dbReference>
<dbReference type="FunFam" id="3.40.640.10:FF:000031">
    <property type="entry name" value="Kynureninase"/>
    <property type="match status" value="1"/>
</dbReference>
<dbReference type="Gene3D" id="3.90.1150.10">
    <property type="entry name" value="Aspartate Aminotransferase, domain 1"/>
    <property type="match status" value="1"/>
</dbReference>
<dbReference type="Gene3D" id="3.40.640.10">
    <property type="entry name" value="Type I PLP-dependent aspartate aminotransferase-like (Major domain)"/>
    <property type="match status" value="1"/>
</dbReference>
<dbReference type="HAMAP" id="MF_01970">
    <property type="entry name" value="Kynureninase"/>
    <property type="match status" value="1"/>
</dbReference>
<dbReference type="InterPro" id="IPR000192">
    <property type="entry name" value="Aminotrans_V_dom"/>
</dbReference>
<dbReference type="InterPro" id="IPR010111">
    <property type="entry name" value="Kynureninase"/>
</dbReference>
<dbReference type="InterPro" id="IPR015424">
    <property type="entry name" value="PyrdxlP-dep_Trfase"/>
</dbReference>
<dbReference type="InterPro" id="IPR015421">
    <property type="entry name" value="PyrdxlP-dep_Trfase_major"/>
</dbReference>
<dbReference type="InterPro" id="IPR015422">
    <property type="entry name" value="PyrdxlP-dep_Trfase_small"/>
</dbReference>
<dbReference type="NCBIfam" id="TIGR01814">
    <property type="entry name" value="kynureninase"/>
    <property type="match status" value="1"/>
</dbReference>
<dbReference type="PANTHER" id="PTHR14084">
    <property type="entry name" value="KYNURENINASE"/>
    <property type="match status" value="1"/>
</dbReference>
<dbReference type="PANTHER" id="PTHR14084:SF2">
    <property type="entry name" value="KYNURENINASE 2"/>
    <property type="match status" value="1"/>
</dbReference>
<dbReference type="Pfam" id="PF00266">
    <property type="entry name" value="Aminotran_5"/>
    <property type="match status" value="1"/>
</dbReference>
<dbReference type="Pfam" id="PF22580">
    <property type="entry name" value="KYNU_C"/>
    <property type="match status" value="1"/>
</dbReference>
<dbReference type="PIRSF" id="PIRSF038800">
    <property type="entry name" value="KYNU"/>
    <property type="match status" value="1"/>
</dbReference>
<dbReference type="SUPFAM" id="SSF53383">
    <property type="entry name" value="PLP-dependent transferases"/>
    <property type="match status" value="1"/>
</dbReference>
<feature type="chain" id="PRO_0000356964" description="Kynureninase 2">
    <location>
        <begin position="1"/>
        <end position="464"/>
    </location>
</feature>
<feature type="binding site" evidence="1">
    <location>
        <position position="135"/>
    </location>
    <ligand>
        <name>pyridoxal 5'-phosphate</name>
        <dbReference type="ChEBI" id="CHEBI:597326"/>
    </ligand>
</feature>
<feature type="binding site" evidence="1">
    <location>
        <position position="136"/>
    </location>
    <ligand>
        <name>pyridoxal 5'-phosphate</name>
        <dbReference type="ChEBI" id="CHEBI:597326"/>
    </ligand>
</feature>
<feature type="binding site" evidence="1">
    <location>
        <begin position="163"/>
        <end position="166"/>
    </location>
    <ligand>
        <name>pyridoxal 5'-phosphate</name>
        <dbReference type="ChEBI" id="CHEBI:597326"/>
    </ligand>
</feature>
<feature type="binding site" evidence="1">
    <location>
        <position position="248"/>
    </location>
    <ligand>
        <name>pyridoxal 5'-phosphate</name>
        <dbReference type="ChEBI" id="CHEBI:597326"/>
    </ligand>
</feature>
<feature type="binding site" evidence="1">
    <location>
        <position position="251"/>
    </location>
    <ligand>
        <name>pyridoxal 5'-phosphate</name>
        <dbReference type="ChEBI" id="CHEBI:597326"/>
    </ligand>
</feature>
<feature type="binding site" evidence="1">
    <location>
        <position position="273"/>
    </location>
    <ligand>
        <name>pyridoxal 5'-phosphate</name>
        <dbReference type="ChEBI" id="CHEBI:597326"/>
    </ligand>
</feature>
<feature type="binding site" evidence="1">
    <location>
        <position position="313"/>
    </location>
    <ligand>
        <name>pyridoxal 5'-phosphate</name>
        <dbReference type="ChEBI" id="CHEBI:597326"/>
    </ligand>
</feature>
<feature type="binding site" evidence="1">
    <location>
        <position position="341"/>
    </location>
    <ligand>
        <name>pyridoxal 5'-phosphate</name>
        <dbReference type="ChEBI" id="CHEBI:597326"/>
    </ligand>
</feature>
<feature type="modified residue" description="N6-(pyridoxal phosphate)lysine" evidence="1">
    <location>
        <position position="274"/>
    </location>
</feature>
<reference key="1">
    <citation type="journal article" date="2008" name="PLoS Genet.">
        <title>Genomic islands in the pathogenic filamentous fungus Aspergillus fumigatus.</title>
        <authorList>
            <person name="Fedorova N.D."/>
            <person name="Khaldi N."/>
            <person name="Joardar V.S."/>
            <person name="Maiti R."/>
            <person name="Amedeo P."/>
            <person name="Anderson M.J."/>
            <person name="Crabtree J."/>
            <person name="Silva J.C."/>
            <person name="Badger J.H."/>
            <person name="Albarraq A."/>
            <person name="Angiuoli S."/>
            <person name="Bussey H."/>
            <person name="Bowyer P."/>
            <person name="Cotty P.J."/>
            <person name="Dyer P.S."/>
            <person name="Egan A."/>
            <person name="Galens K."/>
            <person name="Fraser-Liggett C.M."/>
            <person name="Haas B.J."/>
            <person name="Inman J.M."/>
            <person name="Kent R."/>
            <person name="Lemieux S."/>
            <person name="Malavazi I."/>
            <person name="Orvis J."/>
            <person name="Roemer T."/>
            <person name="Ronning C.M."/>
            <person name="Sundaram J.P."/>
            <person name="Sutton G."/>
            <person name="Turner G."/>
            <person name="Venter J.C."/>
            <person name="White O.R."/>
            <person name="Whitty B.R."/>
            <person name="Youngman P."/>
            <person name="Wolfe K.H."/>
            <person name="Goldman G.H."/>
            <person name="Wortman J.R."/>
            <person name="Jiang B."/>
            <person name="Denning D.W."/>
            <person name="Nierman W.C."/>
        </authorList>
    </citation>
    <scope>NUCLEOTIDE SEQUENCE [LARGE SCALE GENOMIC DNA]</scope>
    <source>
        <strain>CBS 144.89 / FGSC A1163 / CEA10</strain>
    </source>
</reference>
<organism>
    <name type="scientific">Aspergillus fumigatus (strain CBS 144.89 / FGSC A1163 / CEA10)</name>
    <name type="common">Neosartorya fumigata</name>
    <dbReference type="NCBI Taxonomy" id="451804"/>
    <lineage>
        <taxon>Eukaryota</taxon>
        <taxon>Fungi</taxon>
        <taxon>Dikarya</taxon>
        <taxon>Ascomycota</taxon>
        <taxon>Pezizomycotina</taxon>
        <taxon>Eurotiomycetes</taxon>
        <taxon>Eurotiomycetidae</taxon>
        <taxon>Eurotiales</taxon>
        <taxon>Aspergillaceae</taxon>
        <taxon>Aspergillus</taxon>
        <taxon>Aspergillus subgen. Fumigati</taxon>
    </lineage>
</organism>
<name>KYNU2_ASPFC</name>
<evidence type="ECO:0000255" key="1">
    <source>
        <dbReference type="HAMAP-Rule" id="MF_03017"/>
    </source>
</evidence>
<proteinExistence type="inferred from homology"/>
<comment type="function">
    <text evidence="1">Catalyzes the cleavage of L-kynurenine (L-Kyn) and L-3-hydroxykynurenine (L-3OHKyn) into anthranilic acid (AA) and 3-hydroxyanthranilic acid (3-OHAA), respectively.</text>
</comment>
<comment type="catalytic activity">
    <reaction evidence="1">
        <text>L-kynurenine + H2O = anthranilate + L-alanine + H(+)</text>
        <dbReference type="Rhea" id="RHEA:16813"/>
        <dbReference type="ChEBI" id="CHEBI:15377"/>
        <dbReference type="ChEBI" id="CHEBI:15378"/>
        <dbReference type="ChEBI" id="CHEBI:16567"/>
        <dbReference type="ChEBI" id="CHEBI:57959"/>
        <dbReference type="ChEBI" id="CHEBI:57972"/>
        <dbReference type="EC" id="3.7.1.3"/>
    </reaction>
</comment>
<comment type="catalytic activity">
    <reaction evidence="1">
        <text>3-hydroxy-L-kynurenine + H2O = 3-hydroxyanthranilate + L-alanine + H(+)</text>
        <dbReference type="Rhea" id="RHEA:25143"/>
        <dbReference type="ChEBI" id="CHEBI:15377"/>
        <dbReference type="ChEBI" id="CHEBI:15378"/>
        <dbReference type="ChEBI" id="CHEBI:36559"/>
        <dbReference type="ChEBI" id="CHEBI:57972"/>
        <dbReference type="ChEBI" id="CHEBI:58125"/>
        <dbReference type="EC" id="3.7.1.3"/>
    </reaction>
</comment>
<comment type="cofactor">
    <cofactor evidence="1">
        <name>pyridoxal 5'-phosphate</name>
        <dbReference type="ChEBI" id="CHEBI:597326"/>
    </cofactor>
</comment>
<comment type="pathway">
    <text evidence="1">Amino-acid degradation; L-kynurenine degradation; L-alanine and anthranilate from L-kynurenine: step 1/1.</text>
</comment>
<comment type="pathway">
    <text evidence="1">Cofactor biosynthesis; NAD(+) biosynthesis; quinolinate from L-kynurenine: step 2/3.</text>
</comment>
<comment type="subunit">
    <text evidence="1">Homodimer.</text>
</comment>
<comment type="subcellular location">
    <subcellularLocation>
        <location evidence="1">Cytoplasm</location>
    </subcellularLocation>
</comment>
<comment type="similarity">
    <text evidence="1">Belongs to the kynureninase family.</text>
</comment>
<sequence length="464" mass="51198">MSTNGTLSKPEFPANAASKEYAASLDAADPFAGFREKFIIPSKANIASTKLAKPGLSSEPCIYFCGNSLGIQPKATQKYLEAQLDTWSSIGVCGHFTKIEDSPLKEWQNLAEQAAESMSKIVGAAPEEVAAMGTLTMNLHLLLASFFKPTATKRKILMDWKAFPSDHYAIESHLAWHHLDPKETMVLIGPDEGTYEIPTEKILSYIDQHADEAALILLPGIQYYTGQLFDIPKITEYAHSRGLIVGWDLAHAYANVPLKLHDWDVDFAAWCTYKYGNAGPGAMAGLFVHEKHGQVDYSEGEDAPKFRHRLTGWYGGDKSVRFKMDNKFKPIPGAGGYQISNPSAIDLACLCAALSVFDETSIAELRKKSVLMTAYLEYLLLKDTTDESRQFQIITPSDPAARGAQLSLLLKPGLLHKVAHRLQEAGIICDKREPGVVRVAPVPLYNTFTEIWMFVQQLKAALEG</sequence>
<protein>
    <recommendedName>
        <fullName evidence="1">Kynureninase 2</fullName>
        <ecNumber evidence="1">3.7.1.3</ecNumber>
    </recommendedName>
    <alternativeName>
        <fullName evidence="1">Biosynthesis of nicotinic acid protein 5-2</fullName>
    </alternativeName>
    <alternativeName>
        <fullName evidence="1">L-kynurenine hydrolase 2</fullName>
    </alternativeName>
</protein>